<gene>
    <name evidence="1" type="primary">rev</name>
</gene>
<sequence>MAGRSGVNDEDLLKAVKIIKILYQSNPYPDSSQGTRQARRNRRRRWRARQRQIRAISERILGAYLGGPQEPVDLPLPPLGRLTLDHKEDSGDPGTESQQGTATTE</sequence>
<organismHost>
    <name type="scientific">Homo sapiens</name>
    <name type="common">Human</name>
    <dbReference type="NCBI Taxonomy" id="9606"/>
</organismHost>
<proteinExistence type="inferred from homology"/>
<feature type="chain" id="PRO_0000245008" description="Protein Rev">
    <location>
        <begin position="1"/>
        <end position="105"/>
    </location>
</feature>
<feature type="region of interest" description="Homomultimerization" evidence="1">
    <location>
        <begin position="18"/>
        <end position="26"/>
    </location>
</feature>
<feature type="region of interest" description="Disordered" evidence="2">
    <location>
        <begin position="24"/>
        <end position="49"/>
    </location>
</feature>
<feature type="region of interest" description="Disordered" evidence="2">
    <location>
        <begin position="65"/>
        <end position="105"/>
    </location>
</feature>
<feature type="short sequence motif" description="Nuclear localization signal and RNA-binding (RRE)" evidence="1">
    <location>
        <begin position="35"/>
        <end position="51"/>
    </location>
</feature>
<feature type="short sequence motif" description="Nuclear export signal and binding to XPO1" evidence="1">
    <location>
        <begin position="74"/>
        <end position="85"/>
    </location>
</feature>
<feature type="compositionally biased region" description="Polar residues" evidence="2">
    <location>
        <begin position="24"/>
        <end position="35"/>
    </location>
</feature>
<feature type="compositionally biased region" description="Basic residues" evidence="2">
    <location>
        <begin position="37"/>
        <end position="49"/>
    </location>
</feature>
<feature type="compositionally biased region" description="Polar residues" evidence="2">
    <location>
        <begin position="95"/>
        <end position="105"/>
    </location>
</feature>
<feature type="modified residue" description="Phosphoserine; by host CK2" evidence="1">
    <location>
        <position position="5"/>
    </location>
</feature>
<comment type="function">
    <text evidence="1">Escorts unspliced or incompletely spliced viral pre-mRNAs (late transcripts) out of the nucleus of infected cells. These pre-mRNAs carry a recognition sequence called Rev responsive element (RRE) located in the env gene, that is not present in fully spliced viral mRNAs (early transcripts). This function is essential since most viral proteins are translated from unspliced or partially spliced pre-mRNAs which cannot exit the nucleus by the pathway used by fully processed cellular mRNAs. Rev itself is translated from a fully spliced mRNA that readily exits the nucleus. Rev's nuclear localization signal (NLS) binds directly to KPNB1/Importin beta-1 without previous binding to KPNA1/Importin alpha-1. KPNB1 binds to the GDP bound form of RAN (Ran-GDP) and targets Rev to the nucleus. In the nucleus, the conversion from Ran-GDP to Ran-GTP dissociates Rev from KPNB1 and allows Rev's binding to the RRE in viral pre-mRNAs. Rev multimerization on the RRE via cooperative assembly exposes its nuclear export signal (NES) to the surface. Rev can then form a complex with XPO1/CRM1 and Ran-GTP, leading to nuclear export of the complex. Conversion from Ran-GTP to Ran-GDP mediates dissociation of the Rev/RRE/XPO1/RAN complex, so that Rev can return to the nucleus for a subsequent round of export. Beside KPNB1, also seems to interact with TNPO1/Transportin-1, RANBP5/IPO5 and IPO7/RANBP7 for nuclear import. The nucleoporin-like HRB/RIP is an essential cofactor that probably indirectly interacts with Rev to release HIV RNAs from the perinuclear region to the cytoplasm.</text>
</comment>
<comment type="subunit">
    <text evidence="1">Homomultimer; when bound to the RRE. Multimeric assembly is essential for activity and may involve XPO1. Binds to human KPNB1, XPO1, TNPO1, RANBP5 and IPO7. Interacts with the viral Integrase. Interacts with human KHDRBS1. Interacts with human NAP1; this interaction decreases Rev multimerization and stimulates its activity. Interacts with human DEAD-box helicases DDX3 and DDX24; these interactions may serve for viral RNA export to the cytoplasm and packaging, respectively. Interacts with human PSIP1; this interaction may inhibit HIV-1 DNA integration by promoting dissociation of the Integrase-LEDGF/p75 complex.</text>
</comment>
<comment type="subcellular location">
    <subcellularLocation>
        <location evidence="1">Host nucleus</location>
        <location evidence="1">Host nucleolus</location>
    </subcellularLocation>
    <subcellularLocation>
        <location evidence="1">Host cytoplasm</location>
    </subcellularLocation>
    <text evidence="1">The presence of both nuclear import and nuclear export signals leads to continuous shuttling between the nucleus and cytoplasm.</text>
</comment>
<comment type="domain">
    <text evidence="1">The RNA-binding motif binds to the RRE, a 240 bp stem-and-loop structure present in incompletely spliced viral pre-mRNAs. This region also contains the NLS which mediates nuclear localization via KPNB1 binding and, when the N-terminal sequence is present, nucleolar targeting. These overlapping functions prevent Rev bound to RRE from undesirable return to the nucleus. When Rev binds the RRE, the NLS becomes masked while the NES remains accessible. The leucine-rich NES mediates binding to human XPO1.</text>
</comment>
<comment type="PTM">
    <text evidence="1">Asymmetrically arginine dimethylated at one site by host PRMT6. Methylation impairs the RNA-binding activity and export of viral RNA from the nucleus to the cytoplasm.</text>
</comment>
<comment type="PTM">
    <text evidence="1">Phosphorylated by protein kinase CK2. Presence of, and maybe binding to the N-terminus of the regulatory beta subunit of CK2 is necessary for CK2-mediated Rev's phosphorylation.</text>
</comment>
<comment type="miscellaneous">
    <text evidence="1">HIV-1 lineages are divided in three main groups, M (for Major), O (for Outlier), and N (for New, or Non-M, Non-O). The vast majority of strains found worldwide belong to the group M. Group O seems to be endemic to and largely confined to Cameroon and neighboring countries in West Central Africa, where these viruses represent a small minority of HIV-1 strains. The group N is represented by a limited number of isolates from Cameroonian persons. The group M is further subdivided in 9 clades or subtypes (A to D, F to H, J and K).</text>
</comment>
<comment type="similarity">
    <text evidence="1">Belongs to the HIV-1 REV protein family.</text>
</comment>
<name>REV_HV1YB</name>
<organism>
    <name type="scientific">Human immunodeficiency virus type 1 group N (isolate YBF106)</name>
    <name type="common">HIV-1</name>
    <dbReference type="NCBI Taxonomy" id="388819"/>
    <lineage>
        <taxon>Viruses</taxon>
        <taxon>Riboviria</taxon>
        <taxon>Pararnavirae</taxon>
        <taxon>Artverviricota</taxon>
        <taxon>Revtraviricetes</taxon>
        <taxon>Ortervirales</taxon>
        <taxon>Retroviridae</taxon>
        <taxon>Orthoretrovirinae</taxon>
        <taxon>Lentivirus</taxon>
        <taxon>Human immunodeficiency virus type 1</taxon>
    </lineage>
</organism>
<reference key="1">
    <citation type="journal article" date="2004" name="AIDS">
        <title>Phylogenetic characteristics of three new HIV-1 N strains and implications for the origin of group N.</title>
        <authorList>
            <person name="Roques P."/>
            <person name="Robertson D.L."/>
            <person name="Souquiere S."/>
            <person name="Apetrei C."/>
            <person name="Nerrienet E."/>
            <person name="Barre-Sinoussi F."/>
            <person name="Muller-Trutwin M."/>
            <person name="Simon F."/>
        </authorList>
    </citation>
    <scope>NUCLEOTIDE SEQUENCE [GENOMIC DNA]</scope>
    <source>
        <strain>CM_YBF106</strain>
    </source>
</reference>
<reference key="2">
    <citation type="journal article" date="1999" name="Arch. Biochem. Biophys.">
        <title>The ins and outs of HIV Rev.</title>
        <authorList>
            <person name="Hope T.J."/>
        </authorList>
    </citation>
    <scope>REVIEW</scope>
</reference>
<keyword id="KW-0014">AIDS</keyword>
<keyword id="KW-1035">Host cytoplasm</keyword>
<keyword id="KW-1048">Host nucleus</keyword>
<keyword id="KW-0945">Host-virus interaction</keyword>
<keyword id="KW-0488">Methylation</keyword>
<keyword id="KW-0509">mRNA transport</keyword>
<keyword id="KW-0597">Phosphoprotein</keyword>
<keyword id="KW-0694">RNA-binding</keyword>
<keyword id="KW-0813">Transport</keyword>
<protein>
    <recommendedName>
        <fullName evidence="1">Protein Rev</fullName>
    </recommendedName>
    <alternativeName>
        <fullName evidence="1">ART/TRS</fullName>
    </alternativeName>
    <alternativeName>
        <fullName evidence="1">Anti-repression transactivator</fullName>
    </alternativeName>
    <alternativeName>
        <fullName evidence="1">Regulator of expression of viral proteins</fullName>
    </alternativeName>
</protein>
<dbReference type="EMBL" id="AJ271370">
    <property type="protein sequence ID" value="CAB96343.1"/>
    <property type="status" value="ALT_SEQ"/>
    <property type="molecule type" value="Genomic_DNA"/>
</dbReference>
<dbReference type="SMR" id="Q9IDV4"/>
<dbReference type="Proteomes" id="UP000007714">
    <property type="component" value="Segment"/>
</dbReference>
<dbReference type="GO" id="GO:0030430">
    <property type="term" value="C:host cell cytoplasm"/>
    <property type="evidence" value="ECO:0007669"/>
    <property type="project" value="UniProtKB-SubCell"/>
</dbReference>
<dbReference type="GO" id="GO:0044196">
    <property type="term" value="C:host cell nucleolus"/>
    <property type="evidence" value="ECO:0007669"/>
    <property type="project" value="UniProtKB-SubCell"/>
</dbReference>
<dbReference type="GO" id="GO:0003700">
    <property type="term" value="F:DNA-binding transcription factor activity"/>
    <property type="evidence" value="ECO:0007669"/>
    <property type="project" value="UniProtKB-UniRule"/>
</dbReference>
<dbReference type="GO" id="GO:0003723">
    <property type="term" value="F:RNA binding"/>
    <property type="evidence" value="ECO:0007669"/>
    <property type="project" value="UniProtKB-UniRule"/>
</dbReference>
<dbReference type="GO" id="GO:0051028">
    <property type="term" value="P:mRNA transport"/>
    <property type="evidence" value="ECO:0007669"/>
    <property type="project" value="UniProtKB-UniRule"/>
</dbReference>
<dbReference type="GO" id="GO:0016032">
    <property type="term" value="P:viral process"/>
    <property type="evidence" value="ECO:0007669"/>
    <property type="project" value="UniProtKB-UniRule"/>
</dbReference>
<dbReference type="Gene3D" id="6.10.140.630">
    <property type="match status" value="1"/>
</dbReference>
<dbReference type="HAMAP" id="MF_04077">
    <property type="entry name" value="REV_HIV1"/>
    <property type="match status" value="1"/>
</dbReference>
<dbReference type="InterPro" id="IPR000625">
    <property type="entry name" value="REV_protein"/>
</dbReference>
<dbReference type="Pfam" id="PF00424">
    <property type="entry name" value="REV"/>
    <property type="match status" value="1"/>
</dbReference>
<evidence type="ECO:0000255" key="1">
    <source>
        <dbReference type="HAMAP-Rule" id="MF_04077"/>
    </source>
</evidence>
<evidence type="ECO:0000256" key="2">
    <source>
        <dbReference type="SAM" id="MobiDB-lite"/>
    </source>
</evidence>
<accession>Q9IDV4</accession>